<sequence length="298" mass="34491">MQDFSSLLLKLQEYWKDQGCLVIQPYDIPAGAGTFHPATLLRSLDKKPWNVAYVAPSRRPTDGRYGENPNRLGSYYQFQVVIKPSPSNIQELYLKSLEVLGINLNEHDIRFVEDNWESPTLGAWGLGWEVWLDGMEVTQFTYFQQVGGIPCSPIPVEITYGLERLTMYVQKVENILEIEWAKKDNESVRYAQVHLESEYEFSKYHFEVASVERLLEMFKNAQAEALHCLENKLPLPAYDLVMLCSHFFNILDARKAISVAERQNYILQIRDLAKGCAVLYKEQEEEREERLKNALTKA</sequence>
<evidence type="ECO:0000250" key="1"/>
<evidence type="ECO:0000305" key="2"/>
<comment type="catalytic activity">
    <reaction>
        <text>tRNA(Gly) + glycine + ATP = glycyl-tRNA(Gly) + AMP + diphosphate</text>
        <dbReference type="Rhea" id="RHEA:16013"/>
        <dbReference type="Rhea" id="RHEA-COMP:9664"/>
        <dbReference type="Rhea" id="RHEA-COMP:9683"/>
        <dbReference type="ChEBI" id="CHEBI:30616"/>
        <dbReference type="ChEBI" id="CHEBI:33019"/>
        <dbReference type="ChEBI" id="CHEBI:57305"/>
        <dbReference type="ChEBI" id="CHEBI:78442"/>
        <dbReference type="ChEBI" id="CHEBI:78522"/>
        <dbReference type="ChEBI" id="CHEBI:456215"/>
        <dbReference type="EC" id="6.1.1.14"/>
    </reaction>
</comment>
<comment type="subunit">
    <text evidence="1">Tetramer of two alpha and two beta subunits.</text>
</comment>
<comment type="subcellular location">
    <subcellularLocation>
        <location evidence="1">Cytoplasm</location>
    </subcellularLocation>
</comment>
<comment type="similarity">
    <text evidence="2">Belongs to the class-II aminoacyl-tRNA synthetase family.</text>
</comment>
<dbReference type="EC" id="6.1.1.14"/>
<dbReference type="EMBL" id="AE001439">
    <property type="protein sequence ID" value="AAD06462.1"/>
    <property type="molecule type" value="Genomic_DNA"/>
</dbReference>
<dbReference type="PIR" id="G71876">
    <property type="entry name" value="G71876"/>
</dbReference>
<dbReference type="RefSeq" id="WP_001150875.1">
    <property type="nucleotide sequence ID" value="NC_000921.1"/>
</dbReference>
<dbReference type="SMR" id="Q9ZKP1"/>
<dbReference type="KEGG" id="hpj:jhp_0894"/>
<dbReference type="PATRIC" id="fig|85963.30.peg.67"/>
<dbReference type="eggNOG" id="COG0752">
    <property type="taxonomic scope" value="Bacteria"/>
</dbReference>
<dbReference type="Proteomes" id="UP000000804">
    <property type="component" value="Chromosome"/>
</dbReference>
<dbReference type="GO" id="GO:0005829">
    <property type="term" value="C:cytosol"/>
    <property type="evidence" value="ECO:0007669"/>
    <property type="project" value="TreeGrafter"/>
</dbReference>
<dbReference type="GO" id="GO:0005524">
    <property type="term" value="F:ATP binding"/>
    <property type="evidence" value="ECO:0007669"/>
    <property type="project" value="UniProtKB-UniRule"/>
</dbReference>
<dbReference type="GO" id="GO:0004820">
    <property type="term" value="F:glycine-tRNA ligase activity"/>
    <property type="evidence" value="ECO:0007669"/>
    <property type="project" value="UniProtKB-UniRule"/>
</dbReference>
<dbReference type="GO" id="GO:0006426">
    <property type="term" value="P:glycyl-tRNA aminoacylation"/>
    <property type="evidence" value="ECO:0007669"/>
    <property type="project" value="UniProtKB-UniRule"/>
</dbReference>
<dbReference type="CDD" id="cd00733">
    <property type="entry name" value="GlyRS_alpha_core"/>
    <property type="match status" value="1"/>
</dbReference>
<dbReference type="FunFam" id="3.30.930.10:FF:000006">
    <property type="entry name" value="Glycine--tRNA ligase alpha subunit"/>
    <property type="match status" value="1"/>
</dbReference>
<dbReference type="Gene3D" id="3.30.930.10">
    <property type="entry name" value="Bira Bifunctional Protein, Domain 2"/>
    <property type="match status" value="1"/>
</dbReference>
<dbReference type="Gene3D" id="1.20.58.180">
    <property type="entry name" value="Class II aaRS and biotin synthetases, domain 2"/>
    <property type="match status" value="1"/>
</dbReference>
<dbReference type="HAMAP" id="MF_00254">
    <property type="entry name" value="Gly_tRNA_synth_alpha"/>
    <property type="match status" value="1"/>
</dbReference>
<dbReference type="InterPro" id="IPR045864">
    <property type="entry name" value="aa-tRNA-synth_II/BPL/LPL"/>
</dbReference>
<dbReference type="InterPro" id="IPR006194">
    <property type="entry name" value="Gly-tRNA-synth_heterodimer"/>
</dbReference>
<dbReference type="InterPro" id="IPR002310">
    <property type="entry name" value="Gly-tRNA_ligase_asu"/>
</dbReference>
<dbReference type="NCBIfam" id="TIGR00388">
    <property type="entry name" value="glyQ"/>
    <property type="match status" value="1"/>
</dbReference>
<dbReference type="NCBIfam" id="NF006827">
    <property type="entry name" value="PRK09348.1"/>
    <property type="match status" value="1"/>
</dbReference>
<dbReference type="PANTHER" id="PTHR30075:SF2">
    <property type="entry name" value="GLYCINE--TRNA LIGASE, CHLOROPLASTIC_MITOCHONDRIAL 2"/>
    <property type="match status" value="1"/>
</dbReference>
<dbReference type="PANTHER" id="PTHR30075">
    <property type="entry name" value="GLYCYL-TRNA SYNTHETASE"/>
    <property type="match status" value="1"/>
</dbReference>
<dbReference type="Pfam" id="PF02091">
    <property type="entry name" value="tRNA-synt_2e"/>
    <property type="match status" value="1"/>
</dbReference>
<dbReference type="PRINTS" id="PR01044">
    <property type="entry name" value="TRNASYNTHGA"/>
</dbReference>
<dbReference type="SUPFAM" id="SSF55681">
    <property type="entry name" value="Class II aaRS and biotin synthetases"/>
    <property type="match status" value="1"/>
</dbReference>
<dbReference type="PROSITE" id="PS50861">
    <property type="entry name" value="AA_TRNA_LIGASE_II_GLYAB"/>
    <property type="match status" value="1"/>
</dbReference>
<feature type="chain" id="PRO_0000072843" description="Glycine--tRNA ligase alpha subunit">
    <location>
        <begin position="1"/>
        <end position="298"/>
    </location>
</feature>
<keyword id="KW-0030">Aminoacyl-tRNA synthetase</keyword>
<keyword id="KW-0067">ATP-binding</keyword>
<keyword id="KW-0963">Cytoplasm</keyword>
<keyword id="KW-0436">Ligase</keyword>
<keyword id="KW-0547">Nucleotide-binding</keyword>
<keyword id="KW-0648">Protein biosynthesis</keyword>
<reference key="1">
    <citation type="journal article" date="1999" name="Nature">
        <title>Genomic sequence comparison of two unrelated isolates of the human gastric pathogen Helicobacter pylori.</title>
        <authorList>
            <person name="Alm R.A."/>
            <person name="Ling L.-S.L."/>
            <person name="Moir D.T."/>
            <person name="King B.L."/>
            <person name="Brown E.D."/>
            <person name="Doig P.C."/>
            <person name="Smith D.R."/>
            <person name="Noonan B."/>
            <person name="Guild B.C."/>
            <person name="deJonge B.L."/>
            <person name="Carmel G."/>
            <person name="Tummino P.J."/>
            <person name="Caruso A."/>
            <person name="Uria-Nickelsen M."/>
            <person name="Mills D.M."/>
            <person name="Ives C."/>
            <person name="Gibson R."/>
            <person name="Merberg D."/>
            <person name="Mills S.D."/>
            <person name="Jiang Q."/>
            <person name="Taylor D.E."/>
            <person name="Vovis G.F."/>
            <person name="Trust T.J."/>
        </authorList>
    </citation>
    <scope>NUCLEOTIDE SEQUENCE [LARGE SCALE GENOMIC DNA]</scope>
    <source>
        <strain>J99 / ATCC 700824</strain>
    </source>
</reference>
<protein>
    <recommendedName>
        <fullName>Glycine--tRNA ligase alpha subunit</fullName>
        <ecNumber>6.1.1.14</ecNumber>
    </recommendedName>
    <alternativeName>
        <fullName>Glycyl-tRNA synthetase alpha subunit</fullName>
        <shortName>GlyRS</shortName>
    </alternativeName>
</protein>
<accession>Q9ZKP1</accession>
<gene>
    <name type="primary">glyQ</name>
    <name type="ordered locus">jhp_0894</name>
</gene>
<name>SYGA_HELPJ</name>
<organism>
    <name type="scientific">Helicobacter pylori (strain J99 / ATCC 700824)</name>
    <name type="common">Campylobacter pylori J99</name>
    <dbReference type="NCBI Taxonomy" id="85963"/>
    <lineage>
        <taxon>Bacteria</taxon>
        <taxon>Pseudomonadati</taxon>
        <taxon>Campylobacterota</taxon>
        <taxon>Epsilonproteobacteria</taxon>
        <taxon>Campylobacterales</taxon>
        <taxon>Helicobacteraceae</taxon>
        <taxon>Helicobacter</taxon>
    </lineage>
</organism>
<proteinExistence type="inferred from homology"/>